<proteinExistence type="inferred from homology"/>
<reference key="1">
    <citation type="submission" date="2007-09" db="EMBL/GenBank/DDBJ databases">
        <title>Complete genome sequencing of Rickettsia bellii.</title>
        <authorList>
            <person name="Madan A."/>
            <person name="Lee H."/>
            <person name="Madan A."/>
            <person name="Yoon J.-G."/>
            <person name="Ryu G.-Y."/>
            <person name="Dasch G."/>
            <person name="Ereemeva M."/>
        </authorList>
    </citation>
    <scope>NUCLEOTIDE SEQUENCE [LARGE SCALE GENOMIC DNA]</scope>
    <source>
        <strain>OSU 85-389</strain>
    </source>
</reference>
<comment type="function">
    <text evidence="1">DNA-dependent RNA polymerase catalyzes the transcription of DNA into RNA using the four ribonucleoside triphosphates as substrates.</text>
</comment>
<comment type="catalytic activity">
    <reaction evidence="1">
        <text>RNA(n) + a ribonucleoside 5'-triphosphate = RNA(n+1) + diphosphate</text>
        <dbReference type="Rhea" id="RHEA:21248"/>
        <dbReference type="Rhea" id="RHEA-COMP:14527"/>
        <dbReference type="Rhea" id="RHEA-COMP:17342"/>
        <dbReference type="ChEBI" id="CHEBI:33019"/>
        <dbReference type="ChEBI" id="CHEBI:61557"/>
        <dbReference type="ChEBI" id="CHEBI:140395"/>
        <dbReference type="EC" id="2.7.7.6"/>
    </reaction>
</comment>
<comment type="cofactor">
    <cofactor evidence="1">
        <name>Mg(2+)</name>
        <dbReference type="ChEBI" id="CHEBI:18420"/>
    </cofactor>
    <text evidence="1">Binds 1 Mg(2+) ion per subunit.</text>
</comment>
<comment type="cofactor">
    <cofactor evidence="1">
        <name>Zn(2+)</name>
        <dbReference type="ChEBI" id="CHEBI:29105"/>
    </cofactor>
    <text evidence="1">Binds 2 Zn(2+) ions per subunit.</text>
</comment>
<comment type="subunit">
    <text evidence="1">The RNAP catalytic core consists of 2 alpha, 1 beta, 1 beta' and 1 omega subunit. When a sigma factor is associated with the core the holoenzyme is formed, which can initiate transcription.</text>
</comment>
<comment type="similarity">
    <text evidence="1">Belongs to the RNA polymerase beta' chain family.</text>
</comment>
<comment type="sequence caution" evidence="2">
    <conflict type="erroneous initiation">
        <sequence resource="EMBL-CDS" id="ABV78696"/>
    </conflict>
    <text>Extended N-terminus.</text>
</comment>
<name>RPOC_RICB8</name>
<dbReference type="EC" id="2.7.7.6" evidence="1"/>
<dbReference type="EMBL" id="CP000849">
    <property type="protein sequence ID" value="ABV78696.1"/>
    <property type="status" value="ALT_INIT"/>
    <property type="molecule type" value="Genomic_DNA"/>
</dbReference>
<dbReference type="RefSeq" id="WP_041808483.1">
    <property type="nucleotide sequence ID" value="NC_009883.1"/>
</dbReference>
<dbReference type="SMR" id="A8GV25"/>
<dbReference type="KEGG" id="rbo:A1I_01520"/>
<dbReference type="HOGENOM" id="CLU_000524_3_1_5"/>
<dbReference type="GO" id="GO:0000428">
    <property type="term" value="C:DNA-directed RNA polymerase complex"/>
    <property type="evidence" value="ECO:0007669"/>
    <property type="project" value="UniProtKB-KW"/>
</dbReference>
<dbReference type="GO" id="GO:0003677">
    <property type="term" value="F:DNA binding"/>
    <property type="evidence" value="ECO:0007669"/>
    <property type="project" value="UniProtKB-UniRule"/>
</dbReference>
<dbReference type="GO" id="GO:0003899">
    <property type="term" value="F:DNA-directed RNA polymerase activity"/>
    <property type="evidence" value="ECO:0007669"/>
    <property type="project" value="UniProtKB-UniRule"/>
</dbReference>
<dbReference type="GO" id="GO:0000287">
    <property type="term" value="F:magnesium ion binding"/>
    <property type="evidence" value="ECO:0007669"/>
    <property type="project" value="UniProtKB-UniRule"/>
</dbReference>
<dbReference type="GO" id="GO:0008270">
    <property type="term" value="F:zinc ion binding"/>
    <property type="evidence" value="ECO:0007669"/>
    <property type="project" value="UniProtKB-UniRule"/>
</dbReference>
<dbReference type="GO" id="GO:0006351">
    <property type="term" value="P:DNA-templated transcription"/>
    <property type="evidence" value="ECO:0007669"/>
    <property type="project" value="UniProtKB-UniRule"/>
</dbReference>
<dbReference type="CDD" id="cd02655">
    <property type="entry name" value="RNAP_beta'_C"/>
    <property type="match status" value="1"/>
</dbReference>
<dbReference type="CDD" id="cd01609">
    <property type="entry name" value="RNAP_beta'_N"/>
    <property type="match status" value="1"/>
</dbReference>
<dbReference type="FunFam" id="1.10.150.390:FF:000002">
    <property type="entry name" value="DNA-directed RNA polymerase subunit beta"/>
    <property type="match status" value="1"/>
</dbReference>
<dbReference type="Gene3D" id="1.10.132.30">
    <property type="match status" value="1"/>
</dbReference>
<dbReference type="Gene3D" id="1.10.150.390">
    <property type="match status" value="1"/>
</dbReference>
<dbReference type="Gene3D" id="1.10.1790.20">
    <property type="match status" value="1"/>
</dbReference>
<dbReference type="Gene3D" id="1.10.40.90">
    <property type="match status" value="1"/>
</dbReference>
<dbReference type="Gene3D" id="2.40.40.20">
    <property type="match status" value="1"/>
</dbReference>
<dbReference type="Gene3D" id="2.40.50.100">
    <property type="match status" value="3"/>
</dbReference>
<dbReference type="Gene3D" id="4.10.860.120">
    <property type="entry name" value="RNA polymerase II, clamp domain"/>
    <property type="match status" value="1"/>
</dbReference>
<dbReference type="Gene3D" id="1.10.274.100">
    <property type="entry name" value="RNA polymerase Rpb1, domain 3"/>
    <property type="match status" value="1"/>
</dbReference>
<dbReference type="HAMAP" id="MF_01322">
    <property type="entry name" value="RNApol_bact_RpoC"/>
    <property type="match status" value="1"/>
</dbReference>
<dbReference type="InterPro" id="IPR045867">
    <property type="entry name" value="DNA-dir_RpoC_beta_prime"/>
</dbReference>
<dbReference type="InterPro" id="IPR012754">
    <property type="entry name" value="DNA-dir_RpoC_beta_prime_bact"/>
</dbReference>
<dbReference type="InterPro" id="IPR000722">
    <property type="entry name" value="RNA_pol_asu"/>
</dbReference>
<dbReference type="InterPro" id="IPR006592">
    <property type="entry name" value="RNA_pol_N"/>
</dbReference>
<dbReference type="InterPro" id="IPR007080">
    <property type="entry name" value="RNA_pol_Rpb1_1"/>
</dbReference>
<dbReference type="InterPro" id="IPR007066">
    <property type="entry name" value="RNA_pol_Rpb1_3"/>
</dbReference>
<dbReference type="InterPro" id="IPR042102">
    <property type="entry name" value="RNA_pol_Rpb1_3_sf"/>
</dbReference>
<dbReference type="InterPro" id="IPR007083">
    <property type="entry name" value="RNA_pol_Rpb1_4"/>
</dbReference>
<dbReference type="InterPro" id="IPR007081">
    <property type="entry name" value="RNA_pol_Rpb1_5"/>
</dbReference>
<dbReference type="InterPro" id="IPR044893">
    <property type="entry name" value="RNA_pol_Rpb1_clamp_domain"/>
</dbReference>
<dbReference type="InterPro" id="IPR038120">
    <property type="entry name" value="Rpb1_funnel_sf"/>
</dbReference>
<dbReference type="NCBIfam" id="TIGR02386">
    <property type="entry name" value="rpoC_TIGR"/>
    <property type="match status" value="1"/>
</dbReference>
<dbReference type="PANTHER" id="PTHR19376">
    <property type="entry name" value="DNA-DIRECTED RNA POLYMERASE"/>
    <property type="match status" value="1"/>
</dbReference>
<dbReference type="PANTHER" id="PTHR19376:SF54">
    <property type="entry name" value="DNA-DIRECTED RNA POLYMERASE SUBUNIT BETA"/>
    <property type="match status" value="1"/>
</dbReference>
<dbReference type="Pfam" id="PF04997">
    <property type="entry name" value="RNA_pol_Rpb1_1"/>
    <property type="match status" value="1"/>
</dbReference>
<dbReference type="Pfam" id="PF00623">
    <property type="entry name" value="RNA_pol_Rpb1_2"/>
    <property type="match status" value="2"/>
</dbReference>
<dbReference type="Pfam" id="PF04983">
    <property type="entry name" value="RNA_pol_Rpb1_3"/>
    <property type="match status" value="1"/>
</dbReference>
<dbReference type="Pfam" id="PF05000">
    <property type="entry name" value="RNA_pol_Rpb1_4"/>
    <property type="match status" value="1"/>
</dbReference>
<dbReference type="Pfam" id="PF04998">
    <property type="entry name" value="RNA_pol_Rpb1_5"/>
    <property type="match status" value="1"/>
</dbReference>
<dbReference type="SMART" id="SM00663">
    <property type="entry name" value="RPOLA_N"/>
    <property type="match status" value="1"/>
</dbReference>
<dbReference type="SUPFAM" id="SSF64484">
    <property type="entry name" value="beta and beta-prime subunits of DNA dependent RNA-polymerase"/>
    <property type="match status" value="1"/>
</dbReference>
<protein>
    <recommendedName>
        <fullName evidence="1">DNA-directed RNA polymerase subunit beta'</fullName>
        <shortName evidence="1">RNAP subunit beta'</shortName>
        <ecNumber evidence="1">2.7.7.6</ecNumber>
    </recommendedName>
    <alternativeName>
        <fullName evidence="1">RNA polymerase subunit beta'</fullName>
    </alternativeName>
    <alternativeName>
        <fullName evidence="1">Transcriptase subunit beta'</fullName>
    </alternativeName>
</protein>
<organism>
    <name type="scientific">Rickettsia bellii (strain OSU 85-389)</name>
    <dbReference type="NCBI Taxonomy" id="391896"/>
    <lineage>
        <taxon>Bacteria</taxon>
        <taxon>Pseudomonadati</taxon>
        <taxon>Pseudomonadota</taxon>
        <taxon>Alphaproteobacteria</taxon>
        <taxon>Rickettsiales</taxon>
        <taxon>Rickettsiaceae</taxon>
        <taxon>Rickettsieae</taxon>
        <taxon>Rickettsia</taxon>
        <taxon>belli group</taxon>
    </lineage>
</organism>
<accession>A8GV25</accession>
<evidence type="ECO:0000255" key="1">
    <source>
        <dbReference type="HAMAP-Rule" id="MF_01322"/>
    </source>
</evidence>
<evidence type="ECO:0000305" key="2"/>
<sequence>MSVVNFYGQLSNTQQFDQIRINIASPEQVRSWSFGEVIKPETINYRTFKPEKDGLFCARIFGPVKDYECLCGKYKRMKNRGITCEKCGVEVTVSRVRRERMGHIELAAPVAHIWFLKSLPSRISTLLDMTMRDIEKILYFENYVVVDPGLSILQKGELLTEEELQKAKDKYGEDAFTASIGAEVVQQMLKELDFPTLKQELYEELQNTTSEVKKKKLVKRLKLVEDFLESENKPEWMIMNVLPVMPPELRPLVMLDGGRFATSDLNELYRRVINRNNRLKKLIESKAPDIIVRNEKRMLQEAVDALFDNGRRGRAAKNANKRPFKSLSDMLKGKQGRFRQNLLGKRVDYSGRSVIVVGPELKLHQCGLPKKMALELFKPFIYSKLELYGIATTIKAAKRMVEAEKPEVWDVLEEVIREHPVLLNRAPTLHRLGIQAFEPLLIEGKAIQLHPLVCAAFNADFDGDQMAVHIPLSIEAQLEARVFMMSTNNILSPANGRPIIVPDKDIVLGLYYLTLAFDHEVGEGMMFSDLTEMEHALYNKFITIHTKIKYRRNQLNAEGKIVPVIVDTTYGRLMVGELLPSNPNIEYKFINKPLTKKDISLVIDLVYRHCGQKATVIFADQLMKLGFKYACSSGISFGMDDMVVPKSKIVHIDETQLEIKEFEQQYSNGLITYGEKYNKVIDAWSRCTDRVANDMMKEIAKPPVSDDSNQQKINSIYMMAISGARGSFQQIKQLGGMRGLMTKSNGQIIPIPIIANFKEGLTVFECFNSANGMRKGQIDTALKTASSGYLTRKLVDVAQDCIITEKDCNTDKGIEVKSIIEGGEVIAPLAEMILGRTAAINIYHPVTNDLILTKGELINESKLEQIESAGLDRIMIKSVLTCESSTGICAICYGRDLATGSLVSEGEAIGVIAAQSIGEPGTQLTMRTFHIGGAATKGAEVSSVEASYDAKVKILSRNVVINSEERKIVMSRNCELLLLDNNGNEKAHSKIPYGARLLVDEGDMVTKTQKLAEWDPYTIPIITEKSGKVLFKDMVEGISVRDVTDEATGIPSKVIIESKQYSRGAELRPRIQLLDAKGEIIMLSNGLEARYYLPVGAVLSVEDGVQISVGDIIARIPKESTTTKDITGGLPRVAELFEARRPKDHAVIAEIDGRVEFGKDYKSKRRIIINPVDGSMGLEYMVPKGKHVVVNEGDFVKKGDLLIDGNPVLQDILKVMGVELLASYIVKEVQAVYRLQGVKIDDKHIEVIIRQMLQKVEITDSGGTTLLVGEKIDRREFDEINEKAIKNGLRPADAQLILQGITKSSLQTRSFISAASFQETTRVLTEAAIAGKVDKLRGLKENVIVGRLVPAGTGFFMDKMRKVAAKLDEENA</sequence>
<gene>
    <name evidence="1" type="primary">rpoC</name>
    <name type="ordered locus">A1I_01520</name>
</gene>
<keyword id="KW-0240">DNA-directed RNA polymerase</keyword>
<keyword id="KW-0460">Magnesium</keyword>
<keyword id="KW-0479">Metal-binding</keyword>
<keyword id="KW-0548">Nucleotidyltransferase</keyword>
<keyword id="KW-0804">Transcription</keyword>
<keyword id="KW-0808">Transferase</keyword>
<keyword id="KW-0862">Zinc</keyword>
<feature type="chain" id="PRO_0000353420" description="DNA-directed RNA polymerase subunit beta'">
    <location>
        <begin position="1"/>
        <end position="1372"/>
    </location>
</feature>
<feature type="binding site" evidence="1">
    <location>
        <position position="69"/>
    </location>
    <ligand>
        <name>Zn(2+)</name>
        <dbReference type="ChEBI" id="CHEBI:29105"/>
        <label>1</label>
    </ligand>
</feature>
<feature type="binding site" evidence="1">
    <location>
        <position position="71"/>
    </location>
    <ligand>
        <name>Zn(2+)</name>
        <dbReference type="ChEBI" id="CHEBI:29105"/>
        <label>1</label>
    </ligand>
</feature>
<feature type="binding site" evidence="1">
    <location>
        <position position="84"/>
    </location>
    <ligand>
        <name>Zn(2+)</name>
        <dbReference type="ChEBI" id="CHEBI:29105"/>
        <label>1</label>
    </ligand>
</feature>
<feature type="binding site" evidence="1">
    <location>
        <position position="87"/>
    </location>
    <ligand>
        <name>Zn(2+)</name>
        <dbReference type="ChEBI" id="CHEBI:29105"/>
        <label>1</label>
    </ligand>
</feature>
<feature type="binding site" evidence="1">
    <location>
        <position position="460"/>
    </location>
    <ligand>
        <name>Mg(2+)</name>
        <dbReference type="ChEBI" id="CHEBI:18420"/>
    </ligand>
</feature>
<feature type="binding site" evidence="1">
    <location>
        <position position="462"/>
    </location>
    <ligand>
        <name>Mg(2+)</name>
        <dbReference type="ChEBI" id="CHEBI:18420"/>
    </ligand>
</feature>
<feature type="binding site" evidence="1">
    <location>
        <position position="464"/>
    </location>
    <ligand>
        <name>Mg(2+)</name>
        <dbReference type="ChEBI" id="CHEBI:18420"/>
    </ligand>
</feature>
<feature type="binding site" evidence="1">
    <location>
        <position position="808"/>
    </location>
    <ligand>
        <name>Zn(2+)</name>
        <dbReference type="ChEBI" id="CHEBI:29105"/>
        <label>2</label>
    </ligand>
</feature>
<feature type="binding site" evidence="1">
    <location>
        <position position="882"/>
    </location>
    <ligand>
        <name>Zn(2+)</name>
        <dbReference type="ChEBI" id="CHEBI:29105"/>
        <label>2</label>
    </ligand>
</feature>
<feature type="binding site" evidence="1">
    <location>
        <position position="889"/>
    </location>
    <ligand>
        <name>Zn(2+)</name>
        <dbReference type="ChEBI" id="CHEBI:29105"/>
        <label>2</label>
    </ligand>
</feature>
<feature type="binding site" evidence="1">
    <location>
        <position position="892"/>
    </location>
    <ligand>
        <name>Zn(2+)</name>
        <dbReference type="ChEBI" id="CHEBI:29105"/>
        <label>2</label>
    </ligand>
</feature>